<feature type="chain" id="PRO_0000350249" description="Dual-specificity RNA methyltransferase RlmN">
    <location>
        <begin position="1"/>
        <end position="408"/>
    </location>
</feature>
<feature type="domain" description="Radical SAM core" evidence="2">
    <location>
        <begin position="128"/>
        <end position="369"/>
    </location>
</feature>
<feature type="active site" description="Proton acceptor" evidence="1">
    <location>
        <position position="122"/>
    </location>
</feature>
<feature type="active site" description="S-methylcysteine intermediate" evidence="1">
    <location>
        <position position="380"/>
    </location>
</feature>
<feature type="binding site" evidence="1">
    <location>
        <position position="142"/>
    </location>
    <ligand>
        <name>[4Fe-4S] cluster</name>
        <dbReference type="ChEBI" id="CHEBI:49883"/>
        <note>4Fe-4S-S-AdoMet</note>
    </ligand>
</feature>
<feature type="binding site" evidence="1">
    <location>
        <position position="146"/>
    </location>
    <ligand>
        <name>[4Fe-4S] cluster</name>
        <dbReference type="ChEBI" id="CHEBI:49883"/>
        <note>4Fe-4S-S-AdoMet</note>
    </ligand>
</feature>
<feature type="binding site" evidence="1">
    <location>
        <position position="149"/>
    </location>
    <ligand>
        <name>[4Fe-4S] cluster</name>
        <dbReference type="ChEBI" id="CHEBI:49883"/>
        <note>4Fe-4S-S-AdoMet</note>
    </ligand>
</feature>
<feature type="binding site" evidence="1">
    <location>
        <begin position="206"/>
        <end position="207"/>
    </location>
    <ligand>
        <name>S-adenosyl-L-methionine</name>
        <dbReference type="ChEBI" id="CHEBI:59789"/>
    </ligand>
</feature>
<feature type="binding site" evidence="1">
    <location>
        <position position="238"/>
    </location>
    <ligand>
        <name>S-adenosyl-L-methionine</name>
        <dbReference type="ChEBI" id="CHEBI:59789"/>
    </ligand>
</feature>
<feature type="binding site" evidence="1">
    <location>
        <begin position="260"/>
        <end position="262"/>
    </location>
    <ligand>
        <name>S-adenosyl-L-methionine</name>
        <dbReference type="ChEBI" id="CHEBI:59789"/>
    </ligand>
</feature>
<feature type="binding site" evidence="1">
    <location>
        <position position="337"/>
    </location>
    <ligand>
        <name>S-adenosyl-L-methionine</name>
        <dbReference type="ChEBI" id="CHEBI:59789"/>
    </ligand>
</feature>
<feature type="disulfide bond" description="(transient)" evidence="1">
    <location>
        <begin position="135"/>
        <end position="380"/>
    </location>
</feature>
<evidence type="ECO:0000255" key="1">
    <source>
        <dbReference type="HAMAP-Rule" id="MF_01849"/>
    </source>
</evidence>
<evidence type="ECO:0000255" key="2">
    <source>
        <dbReference type="PROSITE-ProRule" id="PRU01266"/>
    </source>
</evidence>
<keyword id="KW-0004">4Fe-4S</keyword>
<keyword id="KW-0963">Cytoplasm</keyword>
<keyword id="KW-1015">Disulfide bond</keyword>
<keyword id="KW-0408">Iron</keyword>
<keyword id="KW-0411">Iron-sulfur</keyword>
<keyword id="KW-0479">Metal-binding</keyword>
<keyword id="KW-0489">Methyltransferase</keyword>
<keyword id="KW-0698">rRNA processing</keyword>
<keyword id="KW-0949">S-adenosyl-L-methionine</keyword>
<keyword id="KW-0808">Transferase</keyword>
<keyword id="KW-0819">tRNA processing</keyword>
<name>RLMN_CHESB</name>
<dbReference type="EC" id="2.1.1.192" evidence="1"/>
<dbReference type="EMBL" id="CP000390">
    <property type="protein sequence ID" value="ABG64235.1"/>
    <property type="molecule type" value="Genomic_DNA"/>
</dbReference>
<dbReference type="SMR" id="Q11EE0"/>
<dbReference type="STRING" id="266779.Meso_2859"/>
<dbReference type="KEGG" id="mes:Meso_2859"/>
<dbReference type="eggNOG" id="COG0820">
    <property type="taxonomic scope" value="Bacteria"/>
</dbReference>
<dbReference type="HOGENOM" id="CLU_029101_2_0_5"/>
<dbReference type="OrthoDB" id="9793973at2"/>
<dbReference type="GO" id="GO:0005737">
    <property type="term" value="C:cytoplasm"/>
    <property type="evidence" value="ECO:0007669"/>
    <property type="project" value="UniProtKB-SubCell"/>
</dbReference>
<dbReference type="GO" id="GO:0051539">
    <property type="term" value="F:4 iron, 4 sulfur cluster binding"/>
    <property type="evidence" value="ECO:0007669"/>
    <property type="project" value="UniProtKB-UniRule"/>
</dbReference>
<dbReference type="GO" id="GO:0046872">
    <property type="term" value="F:metal ion binding"/>
    <property type="evidence" value="ECO:0007669"/>
    <property type="project" value="UniProtKB-KW"/>
</dbReference>
<dbReference type="GO" id="GO:0070040">
    <property type="term" value="F:rRNA (adenine(2503)-C2-)-methyltransferase activity"/>
    <property type="evidence" value="ECO:0007669"/>
    <property type="project" value="UniProtKB-UniRule"/>
</dbReference>
<dbReference type="GO" id="GO:0019843">
    <property type="term" value="F:rRNA binding"/>
    <property type="evidence" value="ECO:0007669"/>
    <property type="project" value="UniProtKB-UniRule"/>
</dbReference>
<dbReference type="GO" id="GO:0002935">
    <property type="term" value="F:tRNA (adenine(37)-C2)-methyltransferase activity"/>
    <property type="evidence" value="ECO:0007669"/>
    <property type="project" value="UniProtKB-UniRule"/>
</dbReference>
<dbReference type="GO" id="GO:0000049">
    <property type="term" value="F:tRNA binding"/>
    <property type="evidence" value="ECO:0007669"/>
    <property type="project" value="UniProtKB-UniRule"/>
</dbReference>
<dbReference type="GO" id="GO:0070475">
    <property type="term" value="P:rRNA base methylation"/>
    <property type="evidence" value="ECO:0007669"/>
    <property type="project" value="UniProtKB-UniRule"/>
</dbReference>
<dbReference type="GO" id="GO:0030488">
    <property type="term" value="P:tRNA methylation"/>
    <property type="evidence" value="ECO:0007669"/>
    <property type="project" value="UniProtKB-UniRule"/>
</dbReference>
<dbReference type="CDD" id="cd01335">
    <property type="entry name" value="Radical_SAM"/>
    <property type="match status" value="1"/>
</dbReference>
<dbReference type="FunFam" id="3.20.20.70:FF:000008">
    <property type="entry name" value="Dual-specificity RNA methyltransferase RlmN"/>
    <property type="match status" value="1"/>
</dbReference>
<dbReference type="Gene3D" id="1.10.150.530">
    <property type="match status" value="1"/>
</dbReference>
<dbReference type="Gene3D" id="3.20.20.70">
    <property type="entry name" value="Aldolase class I"/>
    <property type="match status" value="1"/>
</dbReference>
<dbReference type="HAMAP" id="MF_01849">
    <property type="entry name" value="RNA_methyltr_RlmN"/>
    <property type="match status" value="1"/>
</dbReference>
<dbReference type="InterPro" id="IPR013785">
    <property type="entry name" value="Aldolase_TIM"/>
</dbReference>
<dbReference type="InterPro" id="IPR040072">
    <property type="entry name" value="Methyltransferase_A"/>
</dbReference>
<dbReference type="InterPro" id="IPR048641">
    <property type="entry name" value="RlmN_N"/>
</dbReference>
<dbReference type="InterPro" id="IPR027492">
    <property type="entry name" value="RNA_MTrfase_RlmN"/>
</dbReference>
<dbReference type="InterPro" id="IPR004383">
    <property type="entry name" value="rRNA_lsu_MTrfase_RlmN/Cfr"/>
</dbReference>
<dbReference type="InterPro" id="IPR007197">
    <property type="entry name" value="rSAM"/>
</dbReference>
<dbReference type="NCBIfam" id="TIGR00048">
    <property type="entry name" value="rRNA_mod_RlmN"/>
    <property type="match status" value="1"/>
</dbReference>
<dbReference type="PANTHER" id="PTHR30544">
    <property type="entry name" value="23S RRNA METHYLTRANSFERASE"/>
    <property type="match status" value="1"/>
</dbReference>
<dbReference type="PANTHER" id="PTHR30544:SF5">
    <property type="entry name" value="RADICAL SAM CORE DOMAIN-CONTAINING PROTEIN"/>
    <property type="match status" value="1"/>
</dbReference>
<dbReference type="Pfam" id="PF04055">
    <property type="entry name" value="Radical_SAM"/>
    <property type="match status" value="1"/>
</dbReference>
<dbReference type="Pfam" id="PF21016">
    <property type="entry name" value="RlmN_N"/>
    <property type="match status" value="1"/>
</dbReference>
<dbReference type="PIRSF" id="PIRSF006004">
    <property type="entry name" value="CHP00048"/>
    <property type="match status" value="1"/>
</dbReference>
<dbReference type="SFLD" id="SFLDF00275">
    <property type="entry name" value="adenosine_C2_methyltransferase"/>
    <property type="match status" value="1"/>
</dbReference>
<dbReference type="SFLD" id="SFLDG01062">
    <property type="entry name" value="methyltransferase_(Class_A)"/>
    <property type="match status" value="1"/>
</dbReference>
<dbReference type="SUPFAM" id="SSF102114">
    <property type="entry name" value="Radical SAM enzymes"/>
    <property type="match status" value="1"/>
</dbReference>
<dbReference type="PROSITE" id="PS51918">
    <property type="entry name" value="RADICAL_SAM"/>
    <property type="match status" value="1"/>
</dbReference>
<proteinExistence type="inferred from homology"/>
<gene>
    <name evidence="1" type="primary">rlmN</name>
    <name type="ordered locus">Meso_2859</name>
</gene>
<sequence length="408" mass="45663">MTLTIDTSTPESRALLRPDPTVEKKPLIGLSREEMAQALASIGVPERQVNMRVRQLWHWLYVRGVSDFSRMFNISKELRAKLDEHFTIARPEIVEEQISQDGTRKWLLRFPPRGAGRPVEVETVYIPEEDRGTLCISSQVGCTLTCSFCHTGTQKMVRNLTAGEILDQLLIARDRLGDFPDADTPDGAIVPAEGRKITNIVMMGMGEPLYNFENVKQALLVASDGDGLSLSKRRITLSTSGVVPEIYRTGEEIGIMLAISLHAVRDELRNELVPINKKYPLKDLLDACRAYPGLSNARRITFEYVMLKGVNDSLDDARELVRLLKGIPAKINLIPFNPWPGSAYECSDWEQIEKFAELVNRAGYASPIRTPRGRDILAACGQLKSASERMKKTERLKLEAMMIAGHGD</sequence>
<reference key="1">
    <citation type="submission" date="2006-06" db="EMBL/GenBank/DDBJ databases">
        <title>Complete sequence of chromosome of Mesorhizobium sp. BNC1.</title>
        <authorList>
            <consortium name="US DOE Joint Genome Institute"/>
            <person name="Copeland A."/>
            <person name="Lucas S."/>
            <person name="Lapidus A."/>
            <person name="Barry K."/>
            <person name="Detter J.C."/>
            <person name="Glavina del Rio T."/>
            <person name="Hammon N."/>
            <person name="Israni S."/>
            <person name="Dalin E."/>
            <person name="Tice H."/>
            <person name="Pitluck S."/>
            <person name="Chertkov O."/>
            <person name="Brettin T."/>
            <person name="Bruce D."/>
            <person name="Han C."/>
            <person name="Tapia R."/>
            <person name="Gilna P."/>
            <person name="Schmutz J."/>
            <person name="Larimer F."/>
            <person name="Land M."/>
            <person name="Hauser L."/>
            <person name="Kyrpides N."/>
            <person name="Mikhailova N."/>
            <person name="Richardson P."/>
        </authorList>
    </citation>
    <scope>NUCLEOTIDE SEQUENCE [LARGE SCALE GENOMIC DNA]</scope>
    <source>
        <strain>BNC1</strain>
    </source>
</reference>
<accession>Q11EE0</accession>
<comment type="function">
    <text evidence="1">Specifically methylates position 2 of adenine 2503 in 23S rRNA and position 2 of adenine 37 in tRNAs. m2A2503 modification seems to play a crucial role in the proofreading step occurring at the peptidyl transferase center and thus would serve to optimize ribosomal fidelity.</text>
</comment>
<comment type="catalytic activity">
    <reaction evidence="1">
        <text>adenosine(2503) in 23S rRNA + 2 reduced [2Fe-2S]-[ferredoxin] + 2 S-adenosyl-L-methionine = 2-methyladenosine(2503) in 23S rRNA + 5'-deoxyadenosine + L-methionine + 2 oxidized [2Fe-2S]-[ferredoxin] + S-adenosyl-L-homocysteine</text>
        <dbReference type="Rhea" id="RHEA:42916"/>
        <dbReference type="Rhea" id="RHEA-COMP:10000"/>
        <dbReference type="Rhea" id="RHEA-COMP:10001"/>
        <dbReference type="Rhea" id="RHEA-COMP:10152"/>
        <dbReference type="Rhea" id="RHEA-COMP:10282"/>
        <dbReference type="ChEBI" id="CHEBI:17319"/>
        <dbReference type="ChEBI" id="CHEBI:33737"/>
        <dbReference type="ChEBI" id="CHEBI:33738"/>
        <dbReference type="ChEBI" id="CHEBI:57844"/>
        <dbReference type="ChEBI" id="CHEBI:57856"/>
        <dbReference type="ChEBI" id="CHEBI:59789"/>
        <dbReference type="ChEBI" id="CHEBI:74411"/>
        <dbReference type="ChEBI" id="CHEBI:74497"/>
        <dbReference type="EC" id="2.1.1.192"/>
    </reaction>
</comment>
<comment type="catalytic activity">
    <reaction evidence="1">
        <text>adenosine(37) in tRNA + 2 reduced [2Fe-2S]-[ferredoxin] + 2 S-adenosyl-L-methionine = 2-methyladenosine(37) in tRNA + 5'-deoxyadenosine + L-methionine + 2 oxidized [2Fe-2S]-[ferredoxin] + S-adenosyl-L-homocysteine</text>
        <dbReference type="Rhea" id="RHEA:43332"/>
        <dbReference type="Rhea" id="RHEA-COMP:10000"/>
        <dbReference type="Rhea" id="RHEA-COMP:10001"/>
        <dbReference type="Rhea" id="RHEA-COMP:10162"/>
        <dbReference type="Rhea" id="RHEA-COMP:10485"/>
        <dbReference type="ChEBI" id="CHEBI:17319"/>
        <dbReference type="ChEBI" id="CHEBI:33737"/>
        <dbReference type="ChEBI" id="CHEBI:33738"/>
        <dbReference type="ChEBI" id="CHEBI:57844"/>
        <dbReference type="ChEBI" id="CHEBI:57856"/>
        <dbReference type="ChEBI" id="CHEBI:59789"/>
        <dbReference type="ChEBI" id="CHEBI:74411"/>
        <dbReference type="ChEBI" id="CHEBI:74497"/>
        <dbReference type="EC" id="2.1.1.192"/>
    </reaction>
</comment>
<comment type="cofactor">
    <cofactor evidence="1">
        <name>[4Fe-4S] cluster</name>
        <dbReference type="ChEBI" id="CHEBI:49883"/>
    </cofactor>
    <text evidence="1">Binds 1 [4Fe-4S] cluster. The cluster is coordinated with 3 cysteines and an exchangeable S-adenosyl-L-methionine.</text>
</comment>
<comment type="subcellular location">
    <subcellularLocation>
        <location evidence="1">Cytoplasm</location>
    </subcellularLocation>
</comment>
<comment type="miscellaneous">
    <text evidence="1">Reaction proceeds by a ping-pong mechanism involving intermediate methylation of a conserved cysteine residue.</text>
</comment>
<comment type="similarity">
    <text evidence="1">Belongs to the radical SAM superfamily. RlmN family.</text>
</comment>
<protein>
    <recommendedName>
        <fullName evidence="1">Dual-specificity RNA methyltransferase RlmN</fullName>
        <ecNumber evidence="1">2.1.1.192</ecNumber>
    </recommendedName>
    <alternativeName>
        <fullName evidence="1">23S rRNA (adenine(2503)-C(2))-methyltransferase</fullName>
    </alternativeName>
    <alternativeName>
        <fullName evidence="1">23S rRNA m2A2503 methyltransferase</fullName>
    </alternativeName>
    <alternativeName>
        <fullName evidence="1">Ribosomal RNA large subunit methyltransferase N</fullName>
    </alternativeName>
    <alternativeName>
        <fullName evidence="1">tRNA (adenine(37)-C(2))-methyltransferase</fullName>
    </alternativeName>
    <alternativeName>
        <fullName evidence="1">tRNA m2A37 methyltransferase</fullName>
    </alternativeName>
</protein>
<organism>
    <name type="scientific">Chelativorans sp. (strain BNC1)</name>
    <dbReference type="NCBI Taxonomy" id="266779"/>
    <lineage>
        <taxon>Bacteria</taxon>
        <taxon>Pseudomonadati</taxon>
        <taxon>Pseudomonadota</taxon>
        <taxon>Alphaproteobacteria</taxon>
        <taxon>Hyphomicrobiales</taxon>
        <taxon>Phyllobacteriaceae</taxon>
        <taxon>Chelativorans</taxon>
    </lineage>
</organism>